<reference key="1">
    <citation type="journal article" date="2008" name="PLoS ONE">
        <title>Comparative analysis of Acinetobacters: three genomes for three lifestyles.</title>
        <authorList>
            <person name="Vallenet D."/>
            <person name="Nordmann P."/>
            <person name="Barbe V."/>
            <person name="Poirel L."/>
            <person name="Mangenot S."/>
            <person name="Bataille E."/>
            <person name="Dossat C."/>
            <person name="Gas S."/>
            <person name="Kreimeyer A."/>
            <person name="Lenoble P."/>
            <person name="Oztas S."/>
            <person name="Poulain J."/>
            <person name="Segurens B."/>
            <person name="Robert C."/>
            <person name="Abergel C."/>
            <person name="Claverie J.-M."/>
            <person name="Raoult D."/>
            <person name="Medigue C."/>
            <person name="Weissenbach J."/>
            <person name="Cruveiller S."/>
        </authorList>
    </citation>
    <scope>NUCLEOTIDE SEQUENCE [LARGE SCALE GENOMIC DNA]</scope>
    <source>
        <strain>AYE</strain>
    </source>
</reference>
<proteinExistence type="inferred from homology"/>
<gene>
    <name evidence="1" type="primary">rpmG</name>
    <name type="ordered locus">ABAYE3326</name>
</gene>
<name>RL33_ACIBY</name>
<feature type="chain" id="PRO_0000356363" description="Large ribosomal subunit protein bL33">
    <location>
        <begin position="1"/>
        <end position="51"/>
    </location>
</feature>
<comment type="similarity">
    <text evidence="1">Belongs to the bacterial ribosomal protein bL33 family.</text>
</comment>
<sequence length="51" mass="6090">MRDKIRLVSSAGTGYFYTTTKNKRTMPEKMEIKKFDPKIRQHVIFKEAKIK</sequence>
<accession>B0V4N2</accession>
<keyword id="KW-0687">Ribonucleoprotein</keyword>
<keyword id="KW-0689">Ribosomal protein</keyword>
<dbReference type="EMBL" id="CU459141">
    <property type="protein sequence ID" value="CAM88124.1"/>
    <property type="molecule type" value="Genomic_DNA"/>
</dbReference>
<dbReference type="RefSeq" id="WP_001205031.1">
    <property type="nucleotide sequence ID" value="NZ_JBDGFB010000003.1"/>
</dbReference>
<dbReference type="SMR" id="B0V4N2"/>
<dbReference type="EnsemblBacteria" id="CAM88124">
    <property type="protein sequence ID" value="CAM88124"/>
    <property type="gene ID" value="ABAYE3326"/>
</dbReference>
<dbReference type="GeneID" id="97427282"/>
<dbReference type="KEGG" id="aby:ABAYE3326"/>
<dbReference type="HOGENOM" id="CLU_190949_1_1_6"/>
<dbReference type="GO" id="GO:0022625">
    <property type="term" value="C:cytosolic large ribosomal subunit"/>
    <property type="evidence" value="ECO:0007669"/>
    <property type="project" value="TreeGrafter"/>
</dbReference>
<dbReference type="GO" id="GO:0003735">
    <property type="term" value="F:structural constituent of ribosome"/>
    <property type="evidence" value="ECO:0007669"/>
    <property type="project" value="InterPro"/>
</dbReference>
<dbReference type="GO" id="GO:0006412">
    <property type="term" value="P:translation"/>
    <property type="evidence" value="ECO:0007669"/>
    <property type="project" value="UniProtKB-UniRule"/>
</dbReference>
<dbReference type="FunFam" id="2.20.28.120:FF:000001">
    <property type="entry name" value="50S ribosomal protein L33"/>
    <property type="match status" value="1"/>
</dbReference>
<dbReference type="Gene3D" id="2.20.28.120">
    <property type="entry name" value="Ribosomal protein L33"/>
    <property type="match status" value="1"/>
</dbReference>
<dbReference type="HAMAP" id="MF_00294">
    <property type="entry name" value="Ribosomal_bL33"/>
    <property type="match status" value="1"/>
</dbReference>
<dbReference type="InterPro" id="IPR001705">
    <property type="entry name" value="Ribosomal_bL33"/>
</dbReference>
<dbReference type="InterPro" id="IPR018264">
    <property type="entry name" value="Ribosomal_bL33_CS"/>
</dbReference>
<dbReference type="InterPro" id="IPR038584">
    <property type="entry name" value="Ribosomal_bL33_sf"/>
</dbReference>
<dbReference type="InterPro" id="IPR011332">
    <property type="entry name" value="Ribosomal_zn-bd"/>
</dbReference>
<dbReference type="NCBIfam" id="NF001860">
    <property type="entry name" value="PRK00595.1"/>
    <property type="match status" value="1"/>
</dbReference>
<dbReference type="NCBIfam" id="TIGR01023">
    <property type="entry name" value="rpmG_bact"/>
    <property type="match status" value="1"/>
</dbReference>
<dbReference type="PANTHER" id="PTHR15238">
    <property type="entry name" value="54S RIBOSOMAL PROTEIN L39, MITOCHONDRIAL"/>
    <property type="match status" value="1"/>
</dbReference>
<dbReference type="PANTHER" id="PTHR15238:SF1">
    <property type="entry name" value="LARGE RIBOSOMAL SUBUNIT PROTEIN BL33M"/>
    <property type="match status" value="1"/>
</dbReference>
<dbReference type="Pfam" id="PF00471">
    <property type="entry name" value="Ribosomal_L33"/>
    <property type="match status" value="1"/>
</dbReference>
<dbReference type="SUPFAM" id="SSF57829">
    <property type="entry name" value="Zn-binding ribosomal proteins"/>
    <property type="match status" value="1"/>
</dbReference>
<dbReference type="PROSITE" id="PS00582">
    <property type="entry name" value="RIBOSOMAL_L33"/>
    <property type="match status" value="1"/>
</dbReference>
<organism>
    <name type="scientific">Acinetobacter baumannii (strain AYE)</name>
    <dbReference type="NCBI Taxonomy" id="509173"/>
    <lineage>
        <taxon>Bacteria</taxon>
        <taxon>Pseudomonadati</taxon>
        <taxon>Pseudomonadota</taxon>
        <taxon>Gammaproteobacteria</taxon>
        <taxon>Moraxellales</taxon>
        <taxon>Moraxellaceae</taxon>
        <taxon>Acinetobacter</taxon>
        <taxon>Acinetobacter calcoaceticus/baumannii complex</taxon>
    </lineage>
</organism>
<protein>
    <recommendedName>
        <fullName evidence="1">Large ribosomal subunit protein bL33</fullName>
    </recommendedName>
    <alternativeName>
        <fullName evidence="2">50S ribosomal protein L33</fullName>
    </alternativeName>
</protein>
<evidence type="ECO:0000255" key="1">
    <source>
        <dbReference type="HAMAP-Rule" id="MF_00294"/>
    </source>
</evidence>
<evidence type="ECO:0000305" key="2"/>